<keyword id="KW-0002">3D-structure</keyword>
<keyword id="KW-0067">ATP-binding</keyword>
<keyword id="KW-0963">Cytoplasm</keyword>
<keyword id="KW-0210">Decarboxylase</keyword>
<keyword id="KW-0312">Gluconeogenesis</keyword>
<keyword id="KW-0456">Lyase</keyword>
<keyword id="KW-0464">Manganese</keyword>
<keyword id="KW-0479">Metal-binding</keyword>
<keyword id="KW-0547">Nucleotide-binding</keyword>
<keyword id="KW-1185">Reference proteome</keyword>
<feature type="chain" id="PRO_1000072371" description="Phosphoenolpyruvate carboxykinase (ATP)">
    <location>
        <begin position="1"/>
        <end position="538"/>
    </location>
</feature>
<feature type="binding site">
    <location>
        <position position="64"/>
    </location>
    <ligand>
        <name>substrate</name>
    </ligand>
</feature>
<feature type="binding site">
    <location>
        <position position="152"/>
    </location>
    <ligand>
        <name>ATP</name>
        <dbReference type="ChEBI" id="CHEBI:30616"/>
    </ligand>
</feature>
<feature type="binding site">
    <location>
        <position position="205"/>
    </location>
    <ligand>
        <name>substrate</name>
    </ligand>
</feature>
<feature type="binding site" evidence="2">
    <location>
        <position position="211"/>
    </location>
    <ligand>
        <name>ATP</name>
        <dbReference type="ChEBI" id="CHEBI:30616"/>
    </ligand>
</feature>
<feature type="binding site" evidence="2 3">
    <location>
        <position position="211"/>
    </location>
    <ligand>
        <name>Mn(2+)</name>
        <dbReference type="ChEBI" id="CHEBI:29035"/>
    </ligand>
</feature>
<feature type="binding site" evidence="2">
    <location>
        <position position="211"/>
    </location>
    <ligand>
        <name>substrate</name>
    </ligand>
</feature>
<feature type="binding site" evidence="2">
    <location>
        <position position="230"/>
    </location>
    <ligand>
        <name>ATP</name>
        <dbReference type="ChEBI" id="CHEBI:30616"/>
    </ligand>
</feature>
<feature type="binding site" evidence="2 3">
    <location>
        <position position="230"/>
    </location>
    <ligand>
        <name>Mn(2+)</name>
        <dbReference type="ChEBI" id="CHEBI:29035"/>
    </ligand>
</feature>
<feature type="binding site">
    <location>
        <begin position="246"/>
        <end position="254"/>
    </location>
    <ligand>
        <name>ATP</name>
        <dbReference type="ChEBI" id="CHEBI:30616"/>
    </ligand>
</feature>
<feature type="binding site" evidence="2 3">
    <location>
        <position position="267"/>
    </location>
    <ligand>
        <name>Mn(2+)</name>
        <dbReference type="ChEBI" id="CHEBI:29035"/>
    </ligand>
</feature>
<feature type="binding site" evidence="2">
    <location>
        <position position="295"/>
    </location>
    <ligand>
        <name>ATP</name>
        <dbReference type="ChEBI" id="CHEBI:30616"/>
    </ligand>
</feature>
<feature type="binding site" evidence="2">
    <location>
        <position position="331"/>
    </location>
    <ligand>
        <name>ATP</name>
        <dbReference type="ChEBI" id="CHEBI:30616"/>
    </ligand>
</feature>
<feature type="binding site">
    <location>
        <position position="331"/>
    </location>
    <ligand>
        <name>substrate</name>
    </ligand>
</feature>
<feature type="binding site">
    <location>
        <position position="344"/>
    </location>
    <ligand>
        <name>ATP</name>
        <dbReference type="ChEBI" id="CHEBI:30616"/>
    </ligand>
</feature>
<feature type="binding site" evidence="2">
    <location>
        <begin position="447"/>
        <end position="448"/>
    </location>
    <ligand>
        <name>ATP</name>
        <dbReference type="ChEBI" id="CHEBI:30616"/>
    </ligand>
</feature>
<feature type="binding site" evidence="2">
    <location>
        <position position="453"/>
    </location>
    <ligand>
        <name>ATP</name>
        <dbReference type="ChEBI" id="CHEBI:30616"/>
    </ligand>
</feature>
<feature type="helix" evidence="5">
    <location>
        <begin position="4"/>
        <end position="13"/>
    </location>
</feature>
<feature type="strand" evidence="5">
    <location>
        <begin position="22"/>
        <end position="25"/>
    </location>
</feature>
<feature type="helix" evidence="5">
    <location>
        <begin position="28"/>
        <end position="36"/>
    </location>
</feature>
<feature type="helix" evidence="5">
    <location>
        <begin position="42"/>
        <end position="44"/>
    </location>
</feature>
<feature type="strand" evidence="5">
    <location>
        <begin position="54"/>
        <end position="56"/>
    </location>
</feature>
<feature type="helix" evidence="5">
    <location>
        <begin position="66"/>
        <end position="68"/>
    </location>
</feature>
<feature type="strand" evidence="5">
    <location>
        <begin position="69"/>
        <end position="72"/>
    </location>
</feature>
<feature type="turn" evidence="5">
    <location>
        <begin position="75"/>
        <end position="80"/>
    </location>
</feature>
<feature type="strand" evidence="5">
    <location>
        <begin position="86"/>
        <end position="88"/>
    </location>
</feature>
<feature type="strand" evidence="5">
    <location>
        <begin position="93"/>
        <end position="95"/>
    </location>
</feature>
<feature type="helix" evidence="5">
    <location>
        <begin position="97"/>
        <end position="110"/>
    </location>
</feature>
<feature type="strand" evidence="5">
    <location>
        <begin position="112"/>
        <end position="114"/>
    </location>
</feature>
<feature type="strand" evidence="5">
    <location>
        <begin position="116"/>
        <end position="123"/>
    </location>
</feature>
<feature type="turn" evidence="5">
    <location>
        <begin position="127"/>
        <end position="129"/>
    </location>
</feature>
<feature type="strand" evidence="5">
    <location>
        <begin position="131"/>
        <end position="138"/>
    </location>
</feature>
<feature type="helix" evidence="5">
    <location>
        <begin position="140"/>
        <end position="149"/>
    </location>
</feature>
<feature type="helix" evidence="5">
    <location>
        <begin position="155"/>
        <end position="159"/>
    </location>
</feature>
<feature type="strand" evidence="5">
    <location>
        <begin position="164"/>
        <end position="170"/>
    </location>
</feature>
<feature type="turn" evidence="5">
    <location>
        <begin position="176"/>
        <end position="182"/>
    </location>
</feature>
<feature type="strand" evidence="5">
    <location>
        <begin position="184"/>
        <end position="186"/>
    </location>
</feature>
<feature type="strand" evidence="5">
    <location>
        <begin position="188"/>
        <end position="192"/>
    </location>
</feature>
<feature type="turn" evidence="5">
    <location>
        <begin position="193"/>
        <end position="196"/>
    </location>
</feature>
<feature type="strand" evidence="5">
    <location>
        <begin position="197"/>
        <end position="202"/>
    </location>
</feature>
<feature type="helix" evidence="5">
    <location>
        <begin position="207"/>
        <end position="223"/>
    </location>
</feature>
<feature type="strand" evidence="5">
    <location>
        <begin position="227"/>
        <end position="230"/>
    </location>
</feature>
<feature type="strand" evidence="5">
    <location>
        <begin position="232"/>
        <end position="236"/>
    </location>
</feature>
<feature type="strand" evidence="5">
    <location>
        <begin position="241"/>
        <end position="245"/>
    </location>
</feature>
<feature type="helix" evidence="5">
    <location>
        <begin position="252"/>
        <end position="255"/>
    </location>
</feature>
<feature type="strand" evidence="5">
    <location>
        <begin position="261"/>
        <end position="271"/>
    </location>
</feature>
<feature type="strand" evidence="5">
    <location>
        <begin position="276"/>
        <end position="279"/>
    </location>
</feature>
<feature type="strand" evidence="5">
    <location>
        <begin position="281"/>
        <end position="286"/>
    </location>
</feature>
<feature type="turn" evidence="5">
    <location>
        <begin position="292"/>
        <end position="294"/>
    </location>
</feature>
<feature type="helix" evidence="5">
    <location>
        <begin position="296"/>
        <end position="301"/>
    </location>
</feature>
<feature type="strand" evidence="5">
    <location>
        <begin position="307"/>
        <end position="310"/>
    </location>
</feature>
<feature type="strand" evidence="5">
    <location>
        <begin position="331"/>
        <end position="335"/>
    </location>
</feature>
<feature type="helix" evidence="5">
    <location>
        <begin position="336"/>
        <end position="338"/>
    </location>
</feature>
<feature type="strand" evidence="5">
    <location>
        <begin position="339"/>
        <end position="342"/>
    </location>
</feature>
<feature type="strand" evidence="5">
    <location>
        <begin position="345"/>
        <end position="348"/>
    </location>
</feature>
<feature type="strand" evidence="5">
    <location>
        <begin position="352"/>
        <end position="359"/>
    </location>
</feature>
<feature type="strand" evidence="5">
    <location>
        <begin position="368"/>
        <end position="371"/>
    </location>
</feature>
<feature type="helix" evidence="5">
    <location>
        <begin position="374"/>
        <end position="383"/>
    </location>
</feature>
<feature type="strand" evidence="4">
    <location>
        <begin position="385"/>
        <end position="388"/>
    </location>
</feature>
<feature type="strand" evidence="4">
    <location>
        <begin position="400"/>
        <end position="403"/>
    </location>
</feature>
<feature type="helix" evidence="5">
    <location>
        <begin position="405"/>
        <end position="407"/>
    </location>
</feature>
<feature type="helix" evidence="5">
    <location>
        <begin position="409"/>
        <end position="411"/>
    </location>
</feature>
<feature type="helix" evidence="5">
    <location>
        <begin position="416"/>
        <end position="430"/>
    </location>
</feature>
<feature type="strand" evidence="5">
    <location>
        <begin position="433"/>
        <end position="438"/>
    </location>
</feature>
<feature type="strand" evidence="5">
    <location>
        <begin position="445"/>
        <end position="447"/>
    </location>
</feature>
<feature type="helix" evidence="5">
    <location>
        <begin position="450"/>
        <end position="462"/>
    </location>
</feature>
<feature type="helix" evidence="5">
    <location>
        <begin position="464"/>
        <end position="467"/>
    </location>
</feature>
<feature type="strand" evidence="5">
    <location>
        <begin position="470"/>
        <end position="473"/>
    </location>
</feature>
<feature type="turn" evidence="5">
    <location>
        <begin position="474"/>
        <end position="477"/>
    </location>
</feature>
<feature type="strand" evidence="5">
    <location>
        <begin position="478"/>
        <end position="482"/>
    </location>
</feature>
<feature type="turn" evidence="5">
    <location>
        <begin position="489"/>
        <end position="491"/>
    </location>
</feature>
<feature type="helix" evidence="5">
    <location>
        <begin position="494"/>
        <end position="497"/>
    </location>
</feature>
<feature type="strand" evidence="4">
    <location>
        <begin position="498"/>
        <end position="500"/>
    </location>
</feature>
<feature type="helix" evidence="5">
    <location>
        <begin position="501"/>
        <end position="519"/>
    </location>
</feature>
<feature type="helix" evidence="5">
    <location>
        <begin position="520"/>
        <end position="524"/>
    </location>
</feature>
<feature type="helix" evidence="5">
    <location>
        <begin position="526"/>
        <end position="529"/>
    </location>
</feature>
<feature type="helix" evidence="5">
    <location>
        <begin position="530"/>
        <end position="534"/>
    </location>
</feature>
<protein>
    <recommendedName>
        <fullName evidence="2">Phosphoenolpyruvate carboxykinase (ATP)</fullName>
        <shortName evidence="2">PCK</shortName>
        <shortName evidence="2">PEP carboxykinase</shortName>
        <shortName evidence="2">PEPCK</shortName>
        <ecNumber evidence="2">4.1.1.49</ecNumber>
    </recommendedName>
</protein>
<evidence type="ECO:0000250" key="1"/>
<evidence type="ECO:0000255" key="2">
    <source>
        <dbReference type="HAMAP-Rule" id="MF_00453"/>
    </source>
</evidence>
<evidence type="ECO:0000269" key="3">
    <source>
    </source>
</evidence>
<evidence type="ECO:0007829" key="4">
    <source>
        <dbReference type="PDB" id="1YGG"/>
    </source>
</evidence>
<evidence type="ECO:0007829" key="5">
    <source>
        <dbReference type="PDB" id="1YLH"/>
    </source>
</evidence>
<accession>A6VKV4</accession>
<gene>
    <name evidence="2" type="primary">pckA</name>
    <name type="ordered locus">Asuc_0221</name>
</gene>
<name>PCKA_ACTSZ</name>
<comment type="function">
    <text evidence="1">Involved in gluconeogenesis. Catalyzes the conversion of oxaloacetate (OAA) to phosphoenolpyruvate (PEP) through direct phosphoryl transfer between the nucleoside triphosphate and OAA (By similarity).</text>
</comment>
<comment type="catalytic activity">
    <reaction evidence="2">
        <text>oxaloacetate + ATP = phosphoenolpyruvate + ADP + CO2</text>
        <dbReference type="Rhea" id="RHEA:18617"/>
        <dbReference type="ChEBI" id="CHEBI:16452"/>
        <dbReference type="ChEBI" id="CHEBI:16526"/>
        <dbReference type="ChEBI" id="CHEBI:30616"/>
        <dbReference type="ChEBI" id="CHEBI:58702"/>
        <dbReference type="ChEBI" id="CHEBI:456216"/>
        <dbReference type="EC" id="4.1.1.49"/>
    </reaction>
</comment>
<comment type="cofactor">
    <cofactor evidence="2 3">
        <name>Mn(2+)</name>
        <dbReference type="ChEBI" id="CHEBI:29035"/>
    </cofactor>
    <text evidence="2 3">Binds 1 Mn(2+) ion per subunit.</text>
</comment>
<comment type="pathway">
    <text evidence="2">Carbohydrate biosynthesis; gluconeogenesis.</text>
</comment>
<comment type="subunit">
    <text evidence="2">Monomer.</text>
</comment>
<comment type="subcellular location">
    <subcellularLocation>
        <location evidence="2">Cytoplasm</location>
    </subcellularLocation>
</comment>
<comment type="similarity">
    <text evidence="2">Belongs to the phosphoenolpyruvate carboxykinase (ATP) family.</text>
</comment>
<dbReference type="EC" id="4.1.1.49" evidence="2"/>
<dbReference type="EMBL" id="CP000746">
    <property type="protein sequence ID" value="ABR73601.1"/>
    <property type="molecule type" value="Genomic_DNA"/>
</dbReference>
<dbReference type="RefSeq" id="WP_011978877.1">
    <property type="nucleotide sequence ID" value="NC_009655.1"/>
</dbReference>
<dbReference type="PDB" id="1YGG">
    <property type="method" value="X-ray"/>
    <property type="resolution" value="1.85 A"/>
    <property type="chains" value="A=1-538"/>
</dbReference>
<dbReference type="PDB" id="1YLH">
    <property type="method" value="X-ray"/>
    <property type="resolution" value="1.70 A"/>
    <property type="chains" value="A=1-538"/>
</dbReference>
<dbReference type="PDBsum" id="1YGG"/>
<dbReference type="PDBsum" id="1YLH"/>
<dbReference type="SMR" id="A6VKV4"/>
<dbReference type="STRING" id="339671.Asuc_0221"/>
<dbReference type="KEGG" id="asu:Asuc_0221"/>
<dbReference type="eggNOG" id="COG1866">
    <property type="taxonomic scope" value="Bacteria"/>
</dbReference>
<dbReference type="HOGENOM" id="CLU_018247_0_1_6"/>
<dbReference type="OrthoDB" id="9806325at2"/>
<dbReference type="UniPathway" id="UPA00138"/>
<dbReference type="EvolutionaryTrace" id="A6VKV4"/>
<dbReference type="Proteomes" id="UP000001114">
    <property type="component" value="Chromosome"/>
</dbReference>
<dbReference type="GO" id="GO:0005829">
    <property type="term" value="C:cytosol"/>
    <property type="evidence" value="ECO:0007669"/>
    <property type="project" value="TreeGrafter"/>
</dbReference>
<dbReference type="GO" id="GO:0005524">
    <property type="term" value="F:ATP binding"/>
    <property type="evidence" value="ECO:0007669"/>
    <property type="project" value="UniProtKB-UniRule"/>
</dbReference>
<dbReference type="GO" id="GO:0046872">
    <property type="term" value="F:metal ion binding"/>
    <property type="evidence" value="ECO:0007669"/>
    <property type="project" value="UniProtKB-KW"/>
</dbReference>
<dbReference type="GO" id="GO:0004612">
    <property type="term" value="F:phosphoenolpyruvate carboxykinase (ATP) activity"/>
    <property type="evidence" value="ECO:0007669"/>
    <property type="project" value="UniProtKB-UniRule"/>
</dbReference>
<dbReference type="GO" id="GO:0006094">
    <property type="term" value="P:gluconeogenesis"/>
    <property type="evidence" value="ECO:0007669"/>
    <property type="project" value="UniProtKB-UniRule"/>
</dbReference>
<dbReference type="CDD" id="cd00484">
    <property type="entry name" value="PEPCK_ATP"/>
    <property type="match status" value="1"/>
</dbReference>
<dbReference type="FunFam" id="2.170.8.10:FF:000001">
    <property type="entry name" value="Phosphoenolpyruvate carboxykinase (ATP)"/>
    <property type="match status" value="1"/>
</dbReference>
<dbReference type="FunFam" id="3.40.449.10:FF:000001">
    <property type="entry name" value="Phosphoenolpyruvate carboxykinase (ATP)"/>
    <property type="match status" value="1"/>
</dbReference>
<dbReference type="Gene3D" id="3.90.228.20">
    <property type="match status" value="1"/>
</dbReference>
<dbReference type="Gene3D" id="3.40.449.10">
    <property type="entry name" value="Phosphoenolpyruvate Carboxykinase, domain 1"/>
    <property type="match status" value="1"/>
</dbReference>
<dbReference type="Gene3D" id="2.170.8.10">
    <property type="entry name" value="Phosphoenolpyruvate Carboxykinase, domain 2"/>
    <property type="match status" value="1"/>
</dbReference>
<dbReference type="HAMAP" id="MF_00453">
    <property type="entry name" value="PEPCK_ATP"/>
    <property type="match status" value="1"/>
</dbReference>
<dbReference type="InterPro" id="IPR001272">
    <property type="entry name" value="PEP_carboxykinase_ATP"/>
</dbReference>
<dbReference type="InterPro" id="IPR013035">
    <property type="entry name" value="PEP_carboxykinase_C"/>
</dbReference>
<dbReference type="InterPro" id="IPR008210">
    <property type="entry name" value="PEP_carboxykinase_N"/>
</dbReference>
<dbReference type="InterPro" id="IPR015994">
    <property type="entry name" value="PEPCK_ATP_CS"/>
</dbReference>
<dbReference type="NCBIfam" id="TIGR00224">
    <property type="entry name" value="pckA"/>
    <property type="match status" value="1"/>
</dbReference>
<dbReference type="NCBIfam" id="NF006819">
    <property type="entry name" value="PRK09344.1-1"/>
    <property type="match status" value="1"/>
</dbReference>
<dbReference type="NCBIfam" id="NF006820">
    <property type="entry name" value="PRK09344.1-2"/>
    <property type="match status" value="1"/>
</dbReference>
<dbReference type="NCBIfam" id="NF006821">
    <property type="entry name" value="PRK09344.1-3"/>
    <property type="match status" value="1"/>
</dbReference>
<dbReference type="PANTHER" id="PTHR30031:SF0">
    <property type="entry name" value="PHOSPHOENOLPYRUVATE CARBOXYKINASE (ATP)"/>
    <property type="match status" value="1"/>
</dbReference>
<dbReference type="PANTHER" id="PTHR30031">
    <property type="entry name" value="PHOSPHOENOLPYRUVATE CARBOXYKINASE ATP"/>
    <property type="match status" value="1"/>
</dbReference>
<dbReference type="Pfam" id="PF01293">
    <property type="entry name" value="PEPCK_ATP"/>
    <property type="match status" value="1"/>
</dbReference>
<dbReference type="PIRSF" id="PIRSF006294">
    <property type="entry name" value="PEP_crbxkin"/>
    <property type="match status" value="1"/>
</dbReference>
<dbReference type="SUPFAM" id="SSF68923">
    <property type="entry name" value="PEP carboxykinase N-terminal domain"/>
    <property type="match status" value="1"/>
</dbReference>
<dbReference type="SUPFAM" id="SSF53795">
    <property type="entry name" value="PEP carboxykinase-like"/>
    <property type="match status" value="1"/>
</dbReference>
<dbReference type="PROSITE" id="PS00532">
    <property type="entry name" value="PEPCK_ATP"/>
    <property type="match status" value="1"/>
</dbReference>
<reference key="1">
    <citation type="journal article" date="2010" name="BMC Genomics">
        <title>A genomic perspective on the potential of Actinobacillus succinogenes for industrial succinate production.</title>
        <authorList>
            <person name="McKinlay J.B."/>
            <person name="Laivenieks M."/>
            <person name="Schindler B.D."/>
            <person name="McKinlay A.A."/>
            <person name="Siddaramappa S."/>
            <person name="Challacombe J.F."/>
            <person name="Lowry S.R."/>
            <person name="Clum A."/>
            <person name="Lapidus A.L."/>
            <person name="Burkhart K.B."/>
            <person name="Harkins V."/>
            <person name="Vieille C."/>
        </authorList>
    </citation>
    <scope>NUCLEOTIDE SEQUENCE [LARGE SCALE GENOMIC DNA]</scope>
    <source>
        <strain>ATCC 55618 / DSM 22257 / CCUG 43843 / 130Z</strain>
    </source>
</reference>
<reference key="2">
    <citation type="journal article" date="2005" name="Acta Crystallogr. D">
        <title>Structure of PEP carboxykinase from the succinate-producing Actinobacillus succinogenes: a new conserved active-site motif.</title>
        <authorList>
            <person name="Leduc Y.A."/>
            <person name="Prasad L."/>
            <person name="Laivenieks M."/>
            <person name="Zeikus J.G."/>
            <person name="Delbaere L.T."/>
        </authorList>
    </citation>
    <scope>X-RAY CRYSTALLOGRAPHY (1.70 ANGSTROMS) IN COMPLEX WITH MANGANESE</scope>
    <scope>SUBSTRATE AND ATP ANALOGS</scope>
    <scope>COFACTOR</scope>
</reference>
<proteinExistence type="evidence at protein level"/>
<organism>
    <name type="scientific">Actinobacillus succinogenes (strain ATCC 55618 / DSM 22257 / CCUG 43843 / 130Z)</name>
    <dbReference type="NCBI Taxonomy" id="339671"/>
    <lineage>
        <taxon>Bacteria</taxon>
        <taxon>Pseudomonadati</taxon>
        <taxon>Pseudomonadota</taxon>
        <taxon>Gammaproteobacteria</taxon>
        <taxon>Pasteurellales</taxon>
        <taxon>Pasteurellaceae</taxon>
        <taxon>Actinobacillus</taxon>
    </lineage>
</organism>
<sequence>MTDLNKLVKELNDLGLTDVKEIVYNPSYEQLFEEETKPGLEGFDKGTLTTLGAVAVDTGIFTGRSPKDKYIVCDETTKDTVWWNSEAAKNDNKPMTQETWKSLRELVAKQLSGKRLFVVEGYCGASEKHRIGVRMVTEVAWQAHFVKNMFIRPTDEELKNFKADFTVLNGAKCTNPNWKEQGLNSENFVAFNITEGIQLIGGTWYGGEMKKGMFSMMNYFLPLKGVASMHCSANVGKDGDVAIFFGLSGTGKTTLSTDPKRQLIGDDEHGWDESGVFNFEGGCYAKTINLSQENEPDIYGAIRRDALLENVVVRADGSVDFDDGSKTENTRVSYPIYHIDNIVRPVSKAGHATKVIFLTADAFGVLPPVSKLTPEQTEYYFLSGFTAKLAGTERGVTEPTPTFSACFGAAFLSLHPIQYADVLVERMKASGAEAYLVNTGWNGTGKRISIKDTRGIIDAILDGSIEKAEMGELPIFNLAIPKALPGVDPAILDPRDTYADKAQWQVKAEDLANRFVKNFVKYTANPEAAKLVGAGPKA</sequence>